<sequence>MTAVSANGKTTEKHENGAHTNGTTNGTTNGSMNGNEISHVQKLQPVYYKPPQNLETFELSLRNHFEEKTNKKFADYREFHRFTCDNYGIFWEDLLKLSDVKLHQNYNQVIDHNLKINERPRWFNGATLNYTENVIERGTATDIAVLNASIEETVTEYTYDNLRKDVYRIATSLRNYGIGPGDTVCGFVPNTYDTLVAVFATAAVGAAWCSASVDFGPAGVLDRFRQVHPKVLFTVNHVTYKKKLIDQTDKINEIVKELPTLEKIVVSDTFTSVKFDATKYNQSDKFSSLEEFKTPIADVVLPFVYTPVPFSDPLFVMFSSGTTGIPKAMVHTVGGTLLKHIEEHLVQGDSKKHDRMFFYTTCGWMMYNWMISFLYSKGSVVLFDECPLAPDTHIIMKIAAKTQSTMIGMGAKLYDEYLRLQIPFNTLYDLSKIHTVYSTGSPLKKECFAYINTYIAPGALIASISGGTDIIGCFVGGIKSLSITPGECQCLFLGMDIKSFNYMDEEIINSDEQGELVCVTPFPSMPSHFLNDTDGKKYRDAYFARLEPFWAHGDFVRVNHSTGGVEMLGRSDATLNRGGVRIGTAEIYSVVEKIPHIADCIVAGRLVEEGMDEEVLLFVKMVPGQELTHSIQAAIVSKLRNDMSPRHVPNKIYAVDDIPYTSSGKKVEVAVKQIVSGKAVQKASSIRNPESLDHFVQYRL</sequence>
<accession>Q21166</accession>
<proteinExistence type="evidence at transcript level"/>
<comment type="function">
    <text evidence="1 3">Activates acetoacetate to acetoacetyl-CoA (By similarity). Negatively regulates let-60 Ras activity during vulval induction.</text>
</comment>
<comment type="catalytic activity">
    <reaction>
        <text>acetoacetate + ATP + CoA = acetoacetyl-CoA + AMP + diphosphate</text>
        <dbReference type="Rhea" id="RHEA:16117"/>
        <dbReference type="ChEBI" id="CHEBI:13705"/>
        <dbReference type="ChEBI" id="CHEBI:30616"/>
        <dbReference type="ChEBI" id="CHEBI:33019"/>
        <dbReference type="ChEBI" id="CHEBI:57286"/>
        <dbReference type="ChEBI" id="CHEBI:57287"/>
        <dbReference type="ChEBI" id="CHEBI:456215"/>
        <dbReference type="EC" id="6.2.1.16"/>
    </reaction>
</comment>
<comment type="subcellular location">
    <subcellularLocation>
        <location evidence="3">Cytoplasm</location>
    </subcellularLocation>
    <subcellularLocation>
        <location evidence="3">Nucleus</location>
    </subcellularLocation>
</comment>
<comment type="tissue specificity">
    <text evidence="3">Present in most cells of the organism.</text>
</comment>
<comment type="similarity">
    <text evidence="4">Belongs to the ATP-dependent AMP-binding enzyme family.</text>
</comment>
<keyword id="KW-0067">ATP-binding</keyword>
<keyword id="KW-0963">Cytoplasm</keyword>
<keyword id="KW-0276">Fatty acid metabolism</keyword>
<keyword id="KW-0436">Ligase</keyword>
<keyword id="KW-0443">Lipid metabolism</keyword>
<keyword id="KW-0547">Nucleotide-binding</keyword>
<keyword id="KW-0539">Nucleus</keyword>
<keyword id="KW-1185">Reference proteome</keyword>
<name>SUR5_CAEEL</name>
<reference key="1">
    <citation type="journal article" date="1998" name="Mol. Cell. Biol.">
        <title>Caenorhabditis elegans SUR-5, a novel but conserved protein, negatively regulates LET-60 Ras activity during vulval induction.</title>
        <authorList>
            <person name="Gu T."/>
            <person name="Orita S."/>
            <person name="Han M."/>
        </authorList>
    </citation>
    <scope>NUCLEOTIDE SEQUENCE [MRNA]</scope>
    <scope>FUNCTION</scope>
    <scope>SUBCELLULAR LOCATION</scope>
    <scope>TISSUE SPECIFICITY</scope>
</reference>
<reference key="2">
    <citation type="journal article" date="1998" name="Science">
        <title>Genome sequence of the nematode C. elegans: a platform for investigating biology.</title>
        <authorList>
            <consortium name="The C. elegans sequencing consortium"/>
        </authorList>
    </citation>
    <scope>NUCLEOTIDE SEQUENCE [LARGE SCALE GENOMIC DNA]</scope>
    <source>
        <strain>Bristol N2</strain>
    </source>
</reference>
<gene>
    <name type="primary">sur-5</name>
    <name type="ORF">K03A1.5</name>
</gene>
<organism>
    <name type="scientific">Caenorhabditis elegans</name>
    <dbReference type="NCBI Taxonomy" id="6239"/>
    <lineage>
        <taxon>Eukaryota</taxon>
        <taxon>Metazoa</taxon>
        <taxon>Ecdysozoa</taxon>
        <taxon>Nematoda</taxon>
        <taxon>Chromadorea</taxon>
        <taxon>Rhabditida</taxon>
        <taxon>Rhabditina</taxon>
        <taxon>Rhabditomorpha</taxon>
        <taxon>Rhabditoidea</taxon>
        <taxon>Rhabditidae</taxon>
        <taxon>Peloderinae</taxon>
        <taxon>Caenorhabditis</taxon>
    </lineage>
</organism>
<dbReference type="EC" id="6.2.1.16"/>
<dbReference type="EMBL" id="AY091467">
    <property type="protein sequence ID" value="AAM44123.1"/>
    <property type="molecule type" value="mRNA"/>
</dbReference>
<dbReference type="EMBL" id="FO081579">
    <property type="protein sequence ID" value="CCD72541.1"/>
    <property type="molecule type" value="Genomic_DNA"/>
</dbReference>
<dbReference type="PIR" id="T34321">
    <property type="entry name" value="T34321"/>
</dbReference>
<dbReference type="RefSeq" id="NP_509229.1">
    <property type="nucleotide sequence ID" value="NM_076828.9"/>
</dbReference>
<dbReference type="SMR" id="Q21166"/>
<dbReference type="BioGRID" id="45917">
    <property type="interactions" value="10"/>
</dbReference>
<dbReference type="FunCoup" id="Q21166">
    <property type="interactions" value="841"/>
</dbReference>
<dbReference type="STRING" id="6239.K03A1.5.2"/>
<dbReference type="PaxDb" id="6239-K03A1.5"/>
<dbReference type="PeptideAtlas" id="Q21166"/>
<dbReference type="EnsemblMetazoa" id="K03A1.5.1">
    <property type="protein sequence ID" value="K03A1.5.1"/>
    <property type="gene ID" value="WBGene00006351"/>
</dbReference>
<dbReference type="GeneID" id="180992"/>
<dbReference type="KEGG" id="cel:CELE_K03A1.5"/>
<dbReference type="UCSC" id="K03A1.5">
    <property type="organism name" value="c. elegans"/>
</dbReference>
<dbReference type="AGR" id="WB:WBGene00006351"/>
<dbReference type="CTD" id="180992"/>
<dbReference type="WormBase" id="K03A1.5">
    <property type="protein sequence ID" value="CE04713"/>
    <property type="gene ID" value="WBGene00006351"/>
    <property type="gene designation" value="sur-5"/>
</dbReference>
<dbReference type="eggNOG" id="KOG1175">
    <property type="taxonomic scope" value="Eukaryota"/>
</dbReference>
<dbReference type="GeneTree" id="ENSGT00940000156044"/>
<dbReference type="HOGENOM" id="CLU_000022_3_3_1"/>
<dbReference type="InParanoid" id="Q21166"/>
<dbReference type="OMA" id="MPNTWQT"/>
<dbReference type="OrthoDB" id="10253869at2759"/>
<dbReference type="PhylomeDB" id="Q21166"/>
<dbReference type="Reactome" id="R-CEL-77111">
    <property type="pathway name" value="Synthesis of Ketone Bodies"/>
</dbReference>
<dbReference type="SignaLink" id="Q21166"/>
<dbReference type="PRO" id="PR:Q21166"/>
<dbReference type="Proteomes" id="UP000001940">
    <property type="component" value="Chromosome X"/>
</dbReference>
<dbReference type="Bgee" id="WBGene00006351">
    <property type="expression patterns" value="Expressed in larva and 4 other cell types or tissues"/>
</dbReference>
<dbReference type="GO" id="GO:0005737">
    <property type="term" value="C:cytoplasm"/>
    <property type="evidence" value="ECO:0007669"/>
    <property type="project" value="UniProtKB-SubCell"/>
</dbReference>
<dbReference type="GO" id="GO:0005634">
    <property type="term" value="C:nucleus"/>
    <property type="evidence" value="ECO:0007669"/>
    <property type="project" value="UniProtKB-SubCell"/>
</dbReference>
<dbReference type="GO" id="GO:0030729">
    <property type="term" value="F:acetoacetate-CoA ligase activity"/>
    <property type="evidence" value="ECO:0000318"/>
    <property type="project" value="GO_Central"/>
</dbReference>
<dbReference type="GO" id="GO:0005524">
    <property type="term" value="F:ATP binding"/>
    <property type="evidence" value="ECO:0007669"/>
    <property type="project" value="UniProtKB-KW"/>
</dbReference>
<dbReference type="GO" id="GO:0006631">
    <property type="term" value="P:fatty acid metabolic process"/>
    <property type="evidence" value="ECO:0007669"/>
    <property type="project" value="UniProtKB-KW"/>
</dbReference>
<dbReference type="CDD" id="cd05943">
    <property type="entry name" value="AACS"/>
    <property type="match status" value="1"/>
</dbReference>
<dbReference type="Gene3D" id="3.30.300.30">
    <property type="match status" value="1"/>
</dbReference>
<dbReference type="Gene3D" id="3.40.50.12780">
    <property type="entry name" value="N-terminal domain of ligase-like"/>
    <property type="match status" value="1"/>
</dbReference>
<dbReference type="InterPro" id="IPR005914">
    <property type="entry name" value="Acac_CoA_synth"/>
</dbReference>
<dbReference type="InterPro" id="IPR032387">
    <property type="entry name" value="ACAS_N"/>
</dbReference>
<dbReference type="InterPro" id="IPR025110">
    <property type="entry name" value="AMP-bd_C"/>
</dbReference>
<dbReference type="InterPro" id="IPR045851">
    <property type="entry name" value="AMP-bd_C_sf"/>
</dbReference>
<dbReference type="InterPro" id="IPR020845">
    <property type="entry name" value="AMP-binding_CS"/>
</dbReference>
<dbReference type="InterPro" id="IPR000873">
    <property type="entry name" value="AMP-dep_synth/lig_dom"/>
</dbReference>
<dbReference type="InterPro" id="IPR042099">
    <property type="entry name" value="ANL_N_sf"/>
</dbReference>
<dbReference type="NCBIfam" id="TIGR01217">
    <property type="entry name" value="ac_ac_CoA_syn"/>
    <property type="match status" value="1"/>
</dbReference>
<dbReference type="NCBIfam" id="NF002937">
    <property type="entry name" value="PRK03584.1"/>
    <property type="match status" value="1"/>
</dbReference>
<dbReference type="PANTHER" id="PTHR42921">
    <property type="entry name" value="ACETOACETYL-COA SYNTHETASE"/>
    <property type="match status" value="1"/>
</dbReference>
<dbReference type="PANTHER" id="PTHR42921:SF1">
    <property type="entry name" value="ACETOACETYL-COA SYNTHETASE"/>
    <property type="match status" value="1"/>
</dbReference>
<dbReference type="Pfam" id="PF16177">
    <property type="entry name" value="ACAS_N"/>
    <property type="match status" value="1"/>
</dbReference>
<dbReference type="Pfam" id="PF00501">
    <property type="entry name" value="AMP-binding"/>
    <property type="match status" value="1"/>
</dbReference>
<dbReference type="Pfam" id="PF13193">
    <property type="entry name" value="AMP-binding_C"/>
    <property type="match status" value="1"/>
</dbReference>
<dbReference type="SUPFAM" id="SSF56801">
    <property type="entry name" value="Acetyl-CoA synthetase-like"/>
    <property type="match status" value="1"/>
</dbReference>
<dbReference type="PROSITE" id="PS00455">
    <property type="entry name" value="AMP_BINDING"/>
    <property type="match status" value="1"/>
</dbReference>
<feature type="chain" id="PRO_0000315791" description="Acetoacetyl-CoA synthetase">
    <location>
        <begin position="1"/>
        <end position="700"/>
    </location>
</feature>
<feature type="region of interest" description="Disordered" evidence="2">
    <location>
        <begin position="1"/>
        <end position="35"/>
    </location>
</feature>
<feature type="compositionally biased region" description="Low complexity" evidence="2">
    <location>
        <begin position="18"/>
        <end position="35"/>
    </location>
</feature>
<evidence type="ECO:0000250" key="1"/>
<evidence type="ECO:0000256" key="2">
    <source>
        <dbReference type="SAM" id="MobiDB-lite"/>
    </source>
</evidence>
<evidence type="ECO:0000269" key="3">
    <source>
    </source>
</evidence>
<evidence type="ECO:0000305" key="4"/>
<protein>
    <recommendedName>
        <fullName>Acetoacetyl-CoA synthetase</fullName>
        <ecNumber>6.2.1.16</ecNumber>
    </recommendedName>
    <alternativeName>
        <fullName>Suppressor of activated let-60 Ras protein 5</fullName>
    </alternativeName>
</protein>